<proteinExistence type="inferred from homology"/>
<accession>B5BHF8</accession>
<feature type="chain" id="PRO_1000192329" description="Phosphoenolpyruvate carboxykinase (ATP)">
    <location>
        <begin position="1"/>
        <end position="539"/>
    </location>
</feature>
<feature type="binding site" evidence="1">
    <location>
        <position position="64"/>
    </location>
    <ligand>
        <name>substrate</name>
    </ligand>
</feature>
<feature type="binding site" evidence="1">
    <location>
        <position position="206"/>
    </location>
    <ligand>
        <name>substrate</name>
    </ligand>
</feature>
<feature type="binding site" evidence="1">
    <location>
        <position position="212"/>
    </location>
    <ligand>
        <name>ATP</name>
        <dbReference type="ChEBI" id="CHEBI:30616"/>
    </ligand>
</feature>
<feature type="binding site" evidence="1">
    <location>
        <position position="212"/>
    </location>
    <ligand>
        <name>Mn(2+)</name>
        <dbReference type="ChEBI" id="CHEBI:29035"/>
    </ligand>
</feature>
<feature type="binding site" evidence="1">
    <location>
        <position position="212"/>
    </location>
    <ligand>
        <name>substrate</name>
    </ligand>
</feature>
<feature type="binding site" evidence="1">
    <location>
        <position position="231"/>
    </location>
    <ligand>
        <name>ATP</name>
        <dbReference type="ChEBI" id="CHEBI:30616"/>
    </ligand>
</feature>
<feature type="binding site" evidence="1">
    <location>
        <position position="231"/>
    </location>
    <ligand>
        <name>Mn(2+)</name>
        <dbReference type="ChEBI" id="CHEBI:29035"/>
    </ligand>
</feature>
<feature type="binding site" evidence="1">
    <location>
        <begin position="247"/>
        <end position="255"/>
    </location>
    <ligand>
        <name>ATP</name>
        <dbReference type="ChEBI" id="CHEBI:30616"/>
    </ligand>
</feature>
<feature type="binding site" evidence="1">
    <location>
        <position position="268"/>
    </location>
    <ligand>
        <name>Mn(2+)</name>
        <dbReference type="ChEBI" id="CHEBI:29035"/>
    </ligand>
</feature>
<feature type="binding site" evidence="1">
    <location>
        <position position="296"/>
    </location>
    <ligand>
        <name>ATP</name>
        <dbReference type="ChEBI" id="CHEBI:30616"/>
    </ligand>
</feature>
<feature type="binding site" evidence="1">
    <location>
        <position position="332"/>
    </location>
    <ligand>
        <name>ATP</name>
        <dbReference type="ChEBI" id="CHEBI:30616"/>
    </ligand>
</feature>
<feature type="binding site" evidence="1">
    <location>
        <position position="332"/>
    </location>
    <ligand>
        <name>substrate</name>
    </ligand>
</feature>
<feature type="binding site" evidence="1">
    <location>
        <begin position="448"/>
        <end position="449"/>
    </location>
    <ligand>
        <name>ATP</name>
        <dbReference type="ChEBI" id="CHEBI:30616"/>
    </ligand>
</feature>
<feature type="binding site" evidence="1">
    <location>
        <position position="454"/>
    </location>
    <ligand>
        <name>ATP</name>
        <dbReference type="ChEBI" id="CHEBI:30616"/>
    </ligand>
</feature>
<name>PCKA_SALPK</name>
<protein>
    <recommendedName>
        <fullName evidence="1">Phosphoenolpyruvate carboxykinase (ATP)</fullName>
        <shortName evidence="1">PCK</shortName>
        <shortName evidence="1">PEP carboxykinase</shortName>
        <shortName evidence="1">PEPCK</shortName>
        <ecNumber evidence="1">4.1.1.49</ecNumber>
    </recommendedName>
</protein>
<comment type="function">
    <text evidence="1">Involved in the gluconeogenesis. Catalyzes the conversion of oxaloacetate (OAA) to phosphoenolpyruvate (PEP) through direct phosphoryl transfer between the nucleoside triphosphate and OAA.</text>
</comment>
<comment type="catalytic activity">
    <reaction evidence="1">
        <text>oxaloacetate + ATP = phosphoenolpyruvate + ADP + CO2</text>
        <dbReference type="Rhea" id="RHEA:18617"/>
        <dbReference type="ChEBI" id="CHEBI:16452"/>
        <dbReference type="ChEBI" id="CHEBI:16526"/>
        <dbReference type="ChEBI" id="CHEBI:30616"/>
        <dbReference type="ChEBI" id="CHEBI:58702"/>
        <dbReference type="ChEBI" id="CHEBI:456216"/>
        <dbReference type="EC" id="4.1.1.49"/>
    </reaction>
</comment>
<comment type="cofactor">
    <cofactor evidence="1">
        <name>Mn(2+)</name>
        <dbReference type="ChEBI" id="CHEBI:29035"/>
    </cofactor>
    <text evidence="1">Binds 1 Mn(2+) ion per subunit.</text>
</comment>
<comment type="pathway">
    <text evidence="1">Carbohydrate biosynthesis; gluconeogenesis.</text>
</comment>
<comment type="subunit">
    <text evidence="1">Monomer.</text>
</comment>
<comment type="subcellular location">
    <subcellularLocation>
        <location evidence="1">Cytoplasm</location>
    </subcellularLocation>
</comment>
<comment type="similarity">
    <text evidence="1">Belongs to the phosphoenolpyruvate carboxykinase (ATP) family.</text>
</comment>
<organism>
    <name type="scientific">Salmonella paratyphi A (strain AKU_12601)</name>
    <dbReference type="NCBI Taxonomy" id="554290"/>
    <lineage>
        <taxon>Bacteria</taxon>
        <taxon>Pseudomonadati</taxon>
        <taxon>Pseudomonadota</taxon>
        <taxon>Gammaproteobacteria</taxon>
        <taxon>Enterobacterales</taxon>
        <taxon>Enterobacteriaceae</taxon>
        <taxon>Salmonella</taxon>
    </lineage>
</organism>
<reference key="1">
    <citation type="journal article" date="2009" name="BMC Genomics">
        <title>Pseudogene accumulation in the evolutionary histories of Salmonella enterica serovars Paratyphi A and Typhi.</title>
        <authorList>
            <person name="Holt K.E."/>
            <person name="Thomson N.R."/>
            <person name="Wain J."/>
            <person name="Langridge G.C."/>
            <person name="Hasan R."/>
            <person name="Bhutta Z.A."/>
            <person name="Quail M.A."/>
            <person name="Norbertczak H."/>
            <person name="Walker D."/>
            <person name="Simmonds M."/>
            <person name="White B."/>
            <person name="Bason N."/>
            <person name="Mungall K."/>
            <person name="Dougan G."/>
            <person name="Parkhill J."/>
        </authorList>
    </citation>
    <scope>NUCLEOTIDE SEQUENCE [LARGE SCALE GENOMIC DNA]</scope>
    <source>
        <strain>AKU_12601</strain>
    </source>
</reference>
<evidence type="ECO:0000255" key="1">
    <source>
        <dbReference type="HAMAP-Rule" id="MF_00453"/>
    </source>
</evidence>
<gene>
    <name evidence="1" type="primary">pckA</name>
    <name type="ordered locus">SSPA3140</name>
</gene>
<keyword id="KW-0067">ATP-binding</keyword>
<keyword id="KW-0963">Cytoplasm</keyword>
<keyword id="KW-0210">Decarboxylase</keyword>
<keyword id="KW-0312">Gluconeogenesis</keyword>
<keyword id="KW-0456">Lyase</keyword>
<keyword id="KW-0464">Manganese</keyword>
<keyword id="KW-0479">Metal-binding</keyword>
<keyword id="KW-0547">Nucleotide-binding</keyword>
<sequence length="539" mass="59647">MRVNNLTPQDLKAYGINDVQDIVYNPSYDTLYQEELNPGLEGYERGVLTNLGAVAVDTGIFTGRSPKDKYIVRDDTTRDTLWWSDKGKGKNDNKPLSQETWQHLKGLVTHQLSGKRLFIVDAFCGANADTRLSVRFITEVAWQAHFVKNMFIRPTDEELVGFKPDFIVMNGAKCTNPQWKEQGLNSENFVAFNLTERIQLIGGTWYGGEMKKGMFSVMNYLLPLKGIASMHCSANVGEKGDVAVFFGLSGTGKTTLSTDPKRRLIGDDEHGWDDDGVFNFEGGCYAKTIKLSKEAEPEIYHAIRRDALLENVTVREDGTVDFDDGSKTENTRVSYPIYHIDNIVKPVSKAGHATKVIFLTADAFGVLPPVSRLTANQTQYHFLSGFTAKLAGTERGVTEPTPTFSACFGAAFLTLHPTQYAEVLVKRMQAAGAQAYLVNTGWNGTGKRISIKDTRAIIDAILNGSLDNAETFRLPLFDLAIPTELPGVDTHILDPRNTYASPEQWQEKATALAKLFIENFEKYTDTPAGEALVSAGPKL</sequence>
<dbReference type="EC" id="4.1.1.49" evidence="1"/>
<dbReference type="EMBL" id="FM200053">
    <property type="protein sequence ID" value="CAR61395.1"/>
    <property type="molecule type" value="Genomic_DNA"/>
</dbReference>
<dbReference type="RefSeq" id="WP_001265689.1">
    <property type="nucleotide sequence ID" value="NC_011147.1"/>
</dbReference>
<dbReference type="SMR" id="B5BHF8"/>
<dbReference type="KEGG" id="sek:SSPA3140"/>
<dbReference type="HOGENOM" id="CLU_018247_0_1_6"/>
<dbReference type="UniPathway" id="UPA00138"/>
<dbReference type="Proteomes" id="UP000001869">
    <property type="component" value="Chromosome"/>
</dbReference>
<dbReference type="GO" id="GO:0005829">
    <property type="term" value="C:cytosol"/>
    <property type="evidence" value="ECO:0007669"/>
    <property type="project" value="TreeGrafter"/>
</dbReference>
<dbReference type="GO" id="GO:0005524">
    <property type="term" value="F:ATP binding"/>
    <property type="evidence" value="ECO:0007669"/>
    <property type="project" value="UniProtKB-UniRule"/>
</dbReference>
<dbReference type="GO" id="GO:0046872">
    <property type="term" value="F:metal ion binding"/>
    <property type="evidence" value="ECO:0007669"/>
    <property type="project" value="UniProtKB-KW"/>
</dbReference>
<dbReference type="GO" id="GO:0004612">
    <property type="term" value="F:phosphoenolpyruvate carboxykinase (ATP) activity"/>
    <property type="evidence" value="ECO:0007669"/>
    <property type="project" value="UniProtKB-UniRule"/>
</dbReference>
<dbReference type="GO" id="GO:0006094">
    <property type="term" value="P:gluconeogenesis"/>
    <property type="evidence" value="ECO:0007669"/>
    <property type="project" value="UniProtKB-UniRule"/>
</dbReference>
<dbReference type="CDD" id="cd00484">
    <property type="entry name" value="PEPCK_ATP"/>
    <property type="match status" value="1"/>
</dbReference>
<dbReference type="FunFam" id="2.170.8.10:FF:000001">
    <property type="entry name" value="Phosphoenolpyruvate carboxykinase (ATP)"/>
    <property type="match status" value="1"/>
</dbReference>
<dbReference type="FunFam" id="3.40.449.10:FF:000001">
    <property type="entry name" value="Phosphoenolpyruvate carboxykinase (ATP)"/>
    <property type="match status" value="1"/>
</dbReference>
<dbReference type="Gene3D" id="3.90.228.20">
    <property type="match status" value="1"/>
</dbReference>
<dbReference type="Gene3D" id="3.40.449.10">
    <property type="entry name" value="Phosphoenolpyruvate Carboxykinase, domain 1"/>
    <property type="match status" value="1"/>
</dbReference>
<dbReference type="Gene3D" id="2.170.8.10">
    <property type="entry name" value="Phosphoenolpyruvate Carboxykinase, domain 2"/>
    <property type="match status" value="1"/>
</dbReference>
<dbReference type="HAMAP" id="MF_00453">
    <property type="entry name" value="PEPCK_ATP"/>
    <property type="match status" value="1"/>
</dbReference>
<dbReference type="InterPro" id="IPR001272">
    <property type="entry name" value="PEP_carboxykinase_ATP"/>
</dbReference>
<dbReference type="InterPro" id="IPR013035">
    <property type="entry name" value="PEP_carboxykinase_C"/>
</dbReference>
<dbReference type="InterPro" id="IPR008210">
    <property type="entry name" value="PEP_carboxykinase_N"/>
</dbReference>
<dbReference type="InterPro" id="IPR015994">
    <property type="entry name" value="PEPCK_ATP_CS"/>
</dbReference>
<dbReference type="NCBIfam" id="TIGR00224">
    <property type="entry name" value="pckA"/>
    <property type="match status" value="1"/>
</dbReference>
<dbReference type="NCBIfam" id="NF006819">
    <property type="entry name" value="PRK09344.1-1"/>
    <property type="match status" value="1"/>
</dbReference>
<dbReference type="NCBIfam" id="NF006820">
    <property type="entry name" value="PRK09344.1-2"/>
    <property type="match status" value="1"/>
</dbReference>
<dbReference type="NCBIfam" id="NF006821">
    <property type="entry name" value="PRK09344.1-3"/>
    <property type="match status" value="1"/>
</dbReference>
<dbReference type="PANTHER" id="PTHR30031:SF0">
    <property type="entry name" value="PHOSPHOENOLPYRUVATE CARBOXYKINASE (ATP)"/>
    <property type="match status" value="1"/>
</dbReference>
<dbReference type="PANTHER" id="PTHR30031">
    <property type="entry name" value="PHOSPHOENOLPYRUVATE CARBOXYKINASE ATP"/>
    <property type="match status" value="1"/>
</dbReference>
<dbReference type="Pfam" id="PF01293">
    <property type="entry name" value="PEPCK_ATP"/>
    <property type="match status" value="1"/>
</dbReference>
<dbReference type="PIRSF" id="PIRSF006294">
    <property type="entry name" value="PEP_crbxkin"/>
    <property type="match status" value="1"/>
</dbReference>
<dbReference type="SUPFAM" id="SSF68923">
    <property type="entry name" value="PEP carboxykinase N-terminal domain"/>
    <property type="match status" value="1"/>
</dbReference>
<dbReference type="SUPFAM" id="SSF53795">
    <property type="entry name" value="PEP carboxykinase-like"/>
    <property type="match status" value="1"/>
</dbReference>
<dbReference type="PROSITE" id="PS00532">
    <property type="entry name" value="PEPCK_ATP"/>
    <property type="match status" value="1"/>
</dbReference>